<feature type="chain" id="PRO_0000334004" description="Cell division protein SepF">
    <location>
        <begin position="1"/>
        <end position="155"/>
    </location>
</feature>
<feature type="region of interest" description="Disordered" evidence="2">
    <location>
        <begin position="16"/>
        <end position="44"/>
    </location>
</feature>
<feature type="compositionally biased region" description="Acidic residues" evidence="2">
    <location>
        <begin position="16"/>
        <end position="35"/>
    </location>
</feature>
<name>SEPF_ACET2</name>
<evidence type="ECO:0000255" key="1">
    <source>
        <dbReference type="HAMAP-Rule" id="MF_01197"/>
    </source>
</evidence>
<evidence type="ECO:0000256" key="2">
    <source>
        <dbReference type="SAM" id="MobiDB-lite"/>
    </source>
</evidence>
<reference key="1">
    <citation type="submission" date="2007-02" db="EMBL/GenBank/DDBJ databases">
        <title>Complete sequence of Clostridium thermocellum ATCC 27405.</title>
        <authorList>
            <consortium name="US DOE Joint Genome Institute"/>
            <person name="Copeland A."/>
            <person name="Lucas S."/>
            <person name="Lapidus A."/>
            <person name="Barry K."/>
            <person name="Detter J.C."/>
            <person name="Glavina del Rio T."/>
            <person name="Hammon N."/>
            <person name="Israni S."/>
            <person name="Dalin E."/>
            <person name="Tice H."/>
            <person name="Pitluck S."/>
            <person name="Chertkov O."/>
            <person name="Brettin T."/>
            <person name="Bruce D."/>
            <person name="Han C."/>
            <person name="Tapia R."/>
            <person name="Gilna P."/>
            <person name="Schmutz J."/>
            <person name="Larimer F."/>
            <person name="Land M."/>
            <person name="Hauser L."/>
            <person name="Kyrpides N."/>
            <person name="Mikhailova N."/>
            <person name="Wu J.H.D."/>
            <person name="Newcomb M."/>
            <person name="Richardson P."/>
        </authorList>
    </citation>
    <scope>NUCLEOTIDE SEQUENCE [LARGE SCALE GENOMIC DNA]</scope>
    <source>
        <strain>ATCC 27405 / DSM 1237 / JCM 9322 / NBRC 103400 / NCIMB 10682 / NRRL B-4536 / VPI 7372</strain>
    </source>
</reference>
<dbReference type="EMBL" id="CP000568">
    <property type="protein sequence ID" value="ABN52026.1"/>
    <property type="molecule type" value="Genomic_DNA"/>
</dbReference>
<dbReference type="RefSeq" id="WP_003516374.1">
    <property type="nucleotide sequence ID" value="NC_009012.1"/>
</dbReference>
<dbReference type="SMR" id="A3DDJ7"/>
<dbReference type="STRING" id="203119.Cthe_0791"/>
<dbReference type="GeneID" id="35805698"/>
<dbReference type="KEGG" id="cth:Cthe_0791"/>
<dbReference type="eggNOG" id="COG1799">
    <property type="taxonomic scope" value="Bacteria"/>
</dbReference>
<dbReference type="HOGENOM" id="CLU_078499_4_0_9"/>
<dbReference type="OrthoDB" id="9815206at2"/>
<dbReference type="Proteomes" id="UP000002145">
    <property type="component" value="Chromosome"/>
</dbReference>
<dbReference type="GO" id="GO:0005737">
    <property type="term" value="C:cytoplasm"/>
    <property type="evidence" value="ECO:0007669"/>
    <property type="project" value="UniProtKB-SubCell"/>
</dbReference>
<dbReference type="GO" id="GO:0000917">
    <property type="term" value="P:division septum assembly"/>
    <property type="evidence" value="ECO:0007669"/>
    <property type="project" value="UniProtKB-KW"/>
</dbReference>
<dbReference type="GO" id="GO:0043093">
    <property type="term" value="P:FtsZ-dependent cytokinesis"/>
    <property type="evidence" value="ECO:0007669"/>
    <property type="project" value="UniProtKB-UniRule"/>
</dbReference>
<dbReference type="Gene3D" id="3.30.110.150">
    <property type="entry name" value="SepF-like protein"/>
    <property type="match status" value="1"/>
</dbReference>
<dbReference type="HAMAP" id="MF_01197">
    <property type="entry name" value="SepF"/>
    <property type="match status" value="1"/>
</dbReference>
<dbReference type="InterPro" id="IPR023052">
    <property type="entry name" value="Cell_div_SepF"/>
</dbReference>
<dbReference type="InterPro" id="IPR007561">
    <property type="entry name" value="Cell_div_SepF/SepF-rel"/>
</dbReference>
<dbReference type="InterPro" id="IPR038594">
    <property type="entry name" value="SepF-like_sf"/>
</dbReference>
<dbReference type="PANTHER" id="PTHR35798">
    <property type="entry name" value="CELL DIVISION PROTEIN SEPF"/>
    <property type="match status" value="1"/>
</dbReference>
<dbReference type="PANTHER" id="PTHR35798:SF1">
    <property type="entry name" value="CELL DIVISION PROTEIN SEPF"/>
    <property type="match status" value="1"/>
</dbReference>
<dbReference type="Pfam" id="PF04472">
    <property type="entry name" value="SepF"/>
    <property type="match status" value="1"/>
</dbReference>
<sequence length="155" mass="17410">MSTILNKVLNFVGWETEDEEEDVETVEESEDVEEEESKKPQFIQPLSSRRTQNKVVNIHSASQFKVIVMQPESFNDAKDVCDHLKSKKPVVVNLGSVQKEVAQRIVDFLSGSVYALDGSIQKVSNDIFIVAPHNVDIMGDFKGDITGKAVFPWLK</sequence>
<protein>
    <recommendedName>
        <fullName evidence="1">Cell division protein SepF</fullName>
    </recommendedName>
</protein>
<keyword id="KW-0131">Cell cycle</keyword>
<keyword id="KW-0132">Cell division</keyword>
<keyword id="KW-0963">Cytoplasm</keyword>
<keyword id="KW-1185">Reference proteome</keyword>
<keyword id="KW-0717">Septation</keyword>
<accession>A3DDJ7</accession>
<comment type="function">
    <text evidence="1">Cell division protein that is part of the divisome complex and is recruited early to the Z-ring. Probably stimulates Z-ring formation, perhaps through the cross-linking of FtsZ protofilaments. Its function overlaps with FtsA.</text>
</comment>
<comment type="subunit">
    <text evidence="1">Homodimer. Interacts with FtsZ.</text>
</comment>
<comment type="subcellular location">
    <subcellularLocation>
        <location evidence="1">Cytoplasm</location>
    </subcellularLocation>
    <text evidence="1">Localizes to the division site, in a FtsZ-dependent manner.</text>
</comment>
<comment type="similarity">
    <text evidence="1">Belongs to the SepF family.</text>
</comment>
<gene>
    <name evidence="1" type="primary">sepF</name>
    <name type="ordered locus">Cthe_0791</name>
</gene>
<proteinExistence type="inferred from homology"/>
<organism>
    <name type="scientific">Acetivibrio thermocellus (strain ATCC 27405 / DSM 1237 / JCM 9322 / NBRC 103400 / NCIMB 10682 / NRRL B-4536 / VPI 7372)</name>
    <name type="common">Clostridium thermocellum</name>
    <dbReference type="NCBI Taxonomy" id="203119"/>
    <lineage>
        <taxon>Bacteria</taxon>
        <taxon>Bacillati</taxon>
        <taxon>Bacillota</taxon>
        <taxon>Clostridia</taxon>
        <taxon>Eubacteriales</taxon>
        <taxon>Oscillospiraceae</taxon>
        <taxon>Acetivibrio</taxon>
    </lineage>
</organism>